<protein>
    <recommendedName>
        <fullName evidence="1">Cytochrome b6-f complex subunit 8</fullName>
    </recommendedName>
    <alternativeName>
        <fullName evidence="1">Cytochrome b6-f complex subunit PetN</fullName>
    </alternativeName>
    <alternativeName>
        <fullName evidence="1">Cytochrome b6-f complex subunit VIII</fullName>
    </alternativeName>
</protein>
<dbReference type="EMBL" id="CT971583">
    <property type="protein sequence ID" value="CAK23637.1"/>
    <property type="molecule type" value="Genomic_DNA"/>
</dbReference>
<dbReference type="SMR" id="A5GL22"/>
<dbReference type="STRING" id="32051.SynWH7803_1211"/>
<dbReference type="KEGG" id="syx:SynWH7803_1211"/>
<dbReference type="eggNOG" id="ENOG502ZT1J">
    <property type="taxonomic scope" value="Bacteria"/>
</dbReference>
<dbReference type="HOGENOM" id="CLU_215774_0_0_3"/>
<dbReference type="OrthoDB" id="560308at2"/>
<dbReference type="Proteomes" id="UP000001566">
    <property type="component" value="Chromosome"/>
</dbReference>
<dbReference type="GO" id="GO:0009512">
    <property type="term" value="C:cytochrome b6f complex"/>
    <property type="evidence" value="ECO:0007669"/>
    <property type="project" value="InterPro"/>
</dbReference>
<dbReference type="GO" id="GO:0031676">
    <property type="term" value="C:plasma membrane-derived thylakoid membrane"/>
    <property type="evidence" value="ECO:0007669"/>
    <property type="project" value="UniProtKB-SubCell"/>
</dbReference>
<dbReference type="GO" id="GO:0045158">
    <property type="term" value="F:electron transporter, transferring electrons within cytochrome b6/f complex of photosystem II activity"/>
    <property type="evidence" value="ECO:0007669"/>
    <property type="project" value="InterPro"/>
</dbReference>
<dbReference type="GO" id="GO:0017004">
    <property type="term" value="P:cytochrome complex assembly"/>
    <property type="evidence" value="ECO:0007669"/>
    <property type="project" value="UniProtKB-UniRule"/>
</dbReference>
<dbReference type="GO" id="GO:0015979">
    <property type="term" value="P:photosynthesis"/>
    <property type="evidence" value="ECO:0007669"/>
    <property type="project" value="UniProtKB-KW"/>
</dbReference>
<dbReference type="HAMAP" id="MF_00395">
    <property type="entry name" value="Cytb6_f_PetN"/>
    <property type="match status" value="1"/>
</dbReference>
<dbReference type="InterPro" id="IPR036143">
    <property type="entry name" value="Cytochr_b6-f_cplx_su8_sf"/>
</dbReference>
<dbReference type="InterPro" id="IPR005497">
    <property type="entry name" value="Cytochrome_b6-f_cplx_su8"/>
</dbReference>
<dbReference type="NCBIfam" id="NF002709">
    <property type="entry name" value="PRK02529.1"/>
    <property type="match status" value="1"/>
</dbReference>
<dbReference type="Pfam" id="PF03742">
    <property type="entry name" value="PetN"/>
    <property type="match status" value="1"/>
</dbReference>
<dbReference type="SUPFAM" id="SSF103451">
    <property type="entry name" value="PetN subunit of the cytochrome b6f complex"/>
    <property type="match status" value="1"/>
</dbReference>
<proteinExistence type="inferred from homology"/>
<organism>
    <name type="scientific">Synechococcus sp. (strain WH7803)</name>
    <dbReference type="NCBI Taxonomy" id="32051"/>
    <lineage>
        <taxon>Bacteria</taxon>
        <taxon>Bacillati</taxon>
        <taxon>Cyanobacteriota</taxon>
        <taxon>Cyanophyceae</taxon>
        <taxon>Synechococcales</taxon>
        <taxon>Synechococcaceae</taxon>
        <taxon>Synechococcus</taxon>
    </lineage>
</organism>
<keyword id="KW-0249">Electron transport</keyword>
<keyword id="KW-0472">Membrane</keyword>
<keyword id="KW-0602">Photosynthesis</keyword>
<keyword id="KW-1185">Reference proteome</keyword>
<keyword id="KW-0793">Thylakoid</keyword>
<keyword id="KW-0812">Transmembrane</keyword>
<keyword id="KW-1133">Transmembrane helix</keyword>
<keyword id="KW-0813">Transport</keyword>
<feature type="chain" id="PRO_1000049581" description="Cytochrome b6-f complex subunit 8">
    <location>
        <begin position="1"/>
        <end position="33"/>
    </location>
</feature>
<feature type="transmembrane region" description="Helical" evidence="1">
    <location>
        <begin position="2"/>
        <end position="22"/>
    </location>
</feature>
<comment type="function">
    <text evidence="1">Component of the cytochrome b6-f complex, which mediates electron transfer between photosystem II (PSII) and photosystem I (PSI), cyclic electron flow around PSI, and state transitions.</text>
</comment>
<comment type="subunit">
    <text evidence="1">The 4 large subunits of the cytochrome b6-f complex are cytochrome b6, subunit IV (17 kDa polypeptide, PetD), cytochrome f and the Rieske protein, while the 4 small subunits are PetG, PetL, PetM and PetN. The complex functions as a dimer.</text>
</comment>
<comment type="subcellular location">
    <subcellularLocation>
        <location evidence="1">Cellular thylakoid membrane</location>
        <topology evidence="1">Single-pass membrane protein</topology>
    </subcellularLocation>
</comment>
<comment type="similarity">
    <text evidence="1">Belongs to the PetN family.</text>
</comment>
<name>PETN_SYNPW</name>
<gene>
    <name evidence="1" type="primary">petN</name>
    <name type="ordered locus">SynWH7803_1211</name>
</gene>
<evidence type="ECO:0000255" key="1">
    <source>
        <dbReference type="HAMAP-Rule" id="MF_00395"/>
    </source>
</evidence>
<accession>A5GL22</accession>
<reference key="1">
    <citation type="submission" date="2006-05" db="EMBL/GenBank/DDBJ databases">
        <authorList>
            <consortium name="Genoscope"/>
        </authorList>
    </citation>
    <scope>NUCLEOTIDE SEQUENCE [LARGE SCALE GENOMIC DNA]</scope>
    <source>
        <strain>WH7803</strain>
    </source>
</reference>
<sequence>MLFTLAWASLAAVFSFSIAMVVWGRNGDGTLNF</sequence>